<gene>
    <name evidence="1" type="primary">ureC2</name>
    <name type="ordered locus">Psyr_4436</name>
</gene>
<keyword id="KW-0963">Cytoplasm</keyword>
<keyword id="KW-0378">Hydrolase</keyword>
<keyword id="KW-0479">Metal-binding</keyword>
<keyword id="KW-0533">Nickel</keyword>
<proteinExistence type="inferred from homology"/>
<protein>
    <recommendedName>
        <fullName evidence="1">Urease subunit alpha 2</fullName>
        <ecNumber evidence="1">3.5.1.5</ecNumber>
    </recommendedName>
    <alternativeName>
        <fullName evidence="1">Urea amidohydrolase subunit alpha 2</fullName>
    </alternativeName>
</protein>
<comment type="catalytic activity">
    <reaction evidence="1">
        <text>urea + 2 H2O + H(+) = hydrogencarbonate + 2 NH4(+)</text>
        <dbReference type="Rhea" id="RHEA:20557"/>
        <dbReference type="ChEBI" id="CHEBI:15377"/>
        <dbReference type="ChEBI" id="CHEBI:15378"/>
        <dbReference type="ChEBI" id="CHEBI:16199"/>
        <dbReference type="ChEBI" id="CHEBI:17544"/>
        <dbReference type="ChEBI" id="CHEBI:28938"/>
        <dbReference type="EC" id="3.5.1.5"/>
    </reaction>
</comment>
<comment type="cofactor">
    <cofactor evidence="1">
        <name>Ni cation</name>
        <dbReference type="ChEBI" id="CHEBI:25516"/>
    </cofactor>
    <text evidence="1">Binds 2 nickel ions per subunit.</text>
</comment>
<comment type="pathway">
    <text evidence="1">Nitrogen metabolism; urea degradation; CO(2) and NH(3) from urea (urease route): step 1/1.</text>
</comment>
<comment type="subunit">
    <text evidence="1">May form a heterohexamer of 3 UreC (alpha) and 3 UreAB (gamma/beta) subunits. May also form a heterotrimer of UreA (gamma), UreB (beta) and UreC (alpha) subunits. Three heterotrimers associate to form the active enzyme.</text>
</comment>
<comment type="subcellular location">
    <subcellularLocation>
        <location evidence="1">Cytoplasm</location>
    </subcellularLocation>
</comment>
<comment type="PTM">
    <text evidence="1">Carboxylation allows a single lysine to coordinate two nickel ions.</text>
</comment>
<comment type="similarity">
    <text evidence="1">Belongs to the metallo-dependent hydrolases superfamily. Urease alpha subunit family.</text>
</comment>
<organism>
    <name type="scientific">Pseudomonas syringae pv. syringae (strain B728a)</name>
    <dbReference type="NCBI Taxonomy" id="205918"/>
    <lineage>
        <taxon>Bacteria</taxon>
        <taxon>Pseudomonadati</taxon>
        <taxon>Pseudomonadota</taxon>
        <taxon>Gammaproteobacteria</taxon>
        <taxon>Pseudomonadales</taxon>
        <taxon>Pseudomonadaceae</taxon>
        <taxon>Pseudomonas</taxon>
        <taxon>Pseudomonas syringae</taxon>
    </lineage>
</organism>
<accession>Q4ZN06</accession>
<dbReference type="EC" id="3.5.1.5" evidence="1"/>
<dbReference type="EMBL" id="CP000075">
    <property type="protein sequence ID" value="AAY39466.1"/>
    <property type="molecule type" value="Genomic_DNA"/>
</dbReference>
<dbReference type="RefSeq" id="YP_237504.1">
    <property type="nucleotide sequence ID" value="NC_007005.1"/>
</dbReference>
<dbReference type="SMR" id="Q4ZN06"/>
<dbReference type="STRING" id="205918.Psyr_4436"/>
<dbReference type="MEROPS" id="M38.982"/>
<dbReference type="KEGG" id="psb:Psyr_4436"/>
<dbReference type="PATRIC" id="fig|205918.7.peg.4579"/>
<dbReference type="eggNOG" id="COG0804">
    <property type="taxonomic scope" value="Bacteria"/>
</dbReference>
<dbReference type="HOGENOM" id="CLU_000980_0_0_6"/>
<dbReference type="OrthoDB" id="9802793at2"/>
<dbReference type="UniPathway" id="UPA00258">
    <property type="reaction ID" value="UER00370"/>
</dbReference>
<dbReference type="Proteomes" id="UP000000426">
    <property type="component" value="Chromosome"/>
</dbReference>
<dbReference type="GO" id="GO:0005737">
    <property type="term" value="C:cytoplasm"/>
    <property type="evidence" value="ECO:0007669"/>
    <property type="project" value="UniProtKB-SubCell"/>
</dbReference>
<dbReference type="GO" id="GO:0016151">
    <property type="term" value="F:nickel cation binding"/>
    <property type="evidence" value="ECO:0007669"/>
    <property type="project" value="UniProtKB-UniRule"/>
</dbReference>
<dbReference type="GO" id="GO:0009039">
    <property type="term" value="F:urease activity"/>
    <property type="evidence" value="ECO:0007669"/>
    <property type="project" value="UniProtKB-UniRule"/>
</dbReference>
<dbReference type="GO" id="GO:0043419">
    <property type="term" value="P:urea catabolic process"/>
    <property type="evidence" value="ECO:0007669"/>
    <property type="project" value="UniProtKB-UniRule"/>
</dbReference>
<dbReference type="CDD" id="cd00375">
    <property type="entry name" value="Urease_alpha"/>
    <property type="match status" value="1"/>
</dbReference>
<dbReference type="Gene3D" id="3.20.20.140">
    <property type="entry name" value="Metal-dependent hydrolases"/>
    <property type="match status" value="1"/>
</dbReference>
<dbReference type="Gene3D" id="2.30.40.10">
    <property type="entry name" value="Urease, subunit C, domain 1"/>
    <property type="match status" value="1"/>
</dbReference>
<dbReference type="HAMAP" id="MF_01953">
    <property type="entry name" value="Urease_alpha"/>
    <property type="match status" value="1"/>
</dbReference>
<dbReference type="InterPro" id="IPR006680">
    <property type="entry name" value="Amidohydro-rel"/>
</dbReference>
<dbReference type="InterPro" id="IPR011059">
    <property type="entry name" value="Metal-dep_hydrolase_composite"/>
</dbReference>
<dbReference type="InterPro" id="IPR032466">
    <property type="entry name" value="Metal_Hydrolase"/>
</dbReference>
<dbReference type="InterPro" id="IPR011612">
    <property type="entry name" value="Urease_alpha_N_dom"/>
</dbReference>
<dbReference type="InterPro" id="IPR050112">
    <property type="entry name" value="Urease_alpha_subunit"/>
</dbReference>
<dbReference type="InterPro" id="IPR017950">
    <property type="entry name" value="Urease_AS"/>
</dbReference>
<dbReference type="InterPro" id="IPR005848">
    <property type="entry name" value="Urease_asu"/>
</dbReference>
<dbReference type="InterPro" id="IPR017951">
    <property type="entry name" value="Urease_asu_c"/>
</dbReference>
<dbReference type="InterPro" id="IPR029754">
    <property type="entry name" value="Urease_Ni-bd"/>
</dbReference>
<dbReference type="NCBIfam" id="NF009685">
    <property type="entry name" value="PRK13206.1"/>
    <property type="match status" value="1"/>
</dbReference>
<dbReference type="NCBIfam" id="NF009686">
    <property type="entry name" value="PRK13207.1"/>
    <property type="match status" value="1"/>
</dbReference>
<dbReference type="NCBIfam" id="TIGR01792">
    <property type="entry name" value="urease_alph"/>
    <property type="match status" value="1"/>
</dbReference>
<dbReference type="PANTHER" id="PTHR43440">
    <property type="entry name" value="UREASE"/>
    <property type="match status" value="1"/>
</dbReference>
<dbReference type="PANTHER" id="PTHR43440:SF1">
    <property type="entry name" value="UREASE"/>
    <property type="match status" value="1"/>
</dbReference>
<dbReference type="Pfam" id="PF01979">
    <property type="entry name" value="Amidohydro_1"/>
    <property type="match status" value="1"/>
</dbReference>
<dbReference type="Pfam" id="PF00449">
    <property type="entry name" value="Urease_alpha"/>
    <property type="match status" value="1"/>
</dbReference>
<dbReference type="PRINTS" id="PR01752">
    <property type="entry name" value="UREASE"/>
</dbReference>
<dbReference type="SUPFAM" id="SSF51338">
    <property type="entry name" value="Composite domain of metallo-dependent hydrolases"/>
    <property type="match status" value="2"/>
</dbReference>
<dbReference type="SUPFAM" id="SSF51556">
    <property type="entry name" value="Metallo-dependent hydrolases"/>
    <property type="match status" value="1"/>
</dbReference>
<dbReference type="PROSITE" id="PS01120">
    <property type="entry name" value="UREASE_1"/>
    <property type="match status" value="1"/>
</dbReference>
<dbReference type="PROSITE" id="PS00145">
    <property type="entry name" value="UREASE_2"/>
    <property type="match status" value="1"/>
</dbReference>
<dbReference type="PROSITE" id="PS51368">
    <property type="entry name" value="UREASE_3"/>
    <property type="match status" value="1"/>
</dbReference>
<name>URE12_PSEU2</name>
<reference key="1">
    <citation type="journal article" date="2005" name="Proc. Natl. Acad. Sci. U.S.A.">
        <title>Comparison of the complete genome sequences of Pseudomonas syringae pv. syringae B728a and pv. tomato DC3000.</title>
        <authorList>
            <person name="Feil H."/>
            <person name="Feil W.S."/>
            <person name="Chain P."/>
            <person name="Larimer F."/>
            <person name="Dibartolo G."/>
            <person name="Copeland A."/>
            <person name="Lykidis A."/>
            <person name="Trong S."/>
            <person name="Nolan M."/>
            <person name="Goltsman E."/>
            <person name="Thiel J."/>
            <person name="Malfatti S."/>
            <person name="Loper J.E."/>
            <person name="Lapidus A."/>
            <person name="Detter J.C."/>
            <person name="Land M."/>
            <person name="Richardson P.M."/>
            <person name="Kyrpides N.C."/>
            <person name="Ivanova N."/>
            <person name="Lindow S.E."/>
        </authorList>
    </citation>
    <scope>NUCLEOTIDE SEQUENCE [LARGE SCALE GENOMIC DNA]</scope>
    <source>
        <strain>B728a</strain>
    </source>
</reference>
<feature type="chain" id="PRO_0000234173" description="Urease subunit alpha 2">
    <location>
        <begin position="1"/>
        <end position="566"/>
    </location>
</feature>
<feature type="domain" description="Urease" evidence="1">
    <location>
        <begin position="128"/>
        <end position="566"/>
    </location>
</feature>
<feature type="active site" description="Proton donor" evidence="1">
    <location>
        <position position="319"/>
    </location>
</feature>
<feature type="binding site" evidence="1">
    <location>
        <position position="133"/>
    </location>
    <ligand>
        <name>Ni(2+)</name>
        <dbReference type="ChEBI" id="CHEBI:49786"/>
        <label>1</label>
    </ligand>
</feature>
<feature type="binding site" evidence="1">
    <location>
        <position position="135"/>
    </location>
    <ligand>
        <name>Ni(2+)</name>
        <dbReference type="ChEBI" id="CHEBI:49786"/>
        <label>1</label>
    </ligand>
</feature>
<feature type="binding site" description="via carbamate group" evidence="1">
    <location>
        <position position="216"/>
    </location>
    <ligand>
        <name>Ni(2+)</name>
        <dbReference type="ChEBI" id="CHEBI:49786"/>
        <label>1</label>
    </ligand>
</feature>
<feature type="binding site" description="via carbamate group" evidence="1">
    <location>
        <position position="216"/>
    </location>
    <ligand>
        <name>Ni(2+)</name>
        <dbReference type="ChEBI" id="CHEBI:49786"/>
        <label>2</label>
    </ligand>
</feature>
<feature type="binding site" evidence="1">
    <location>
        <position position="218"/>
    </location>
    <ligand>
        <name>substrate</name>
    </ligand>
</feature>
<feature type="binding site" evidence="1">
    <location>
        <position position="245"/>
    </location>
    <ligand>
        <name>Ni(2+)</name>
        <dbReference type="ChEBI" id="CHEBI:49786"/>
        <label>2</label>
    </ligand>
</feature>
<feature type="binding site" evidence="1">
    <location>
        <position position="271"/>
    </location>
    <ligand>
        <name>Ni(2+)</name>
        <dbReference type="ChEBI" id="CHEBI:49786"/>
        <label>2</label>
    </ligand>
</feature>
<feature type="binding site" evidence="1">
    <location>
        <position position="359"/>
    </location>
    <ligand>
        <name>Ni(2+)</name>
        <dbReference type="ChEBI" id="CHEBI:49786"/>
        <label>1</label>
    </ligand>
</feature>
<feature type="modified residue" description="N6-carboxylysine" evidence="1">
    <location>
        <position position="216"/>
    </location>
</feature>
<sequence>MKISRQAYADMFGPTVGDKVRLADTELWIEVEKDFTTYGEEVKFGGGKVIRDGMGQGQLLAAEVVDTLITNALIIDHWGIVKADVGIKNGRIAAIGKAGNPDIQPDVTIAVGAATEVIAGEGMILTAGGVDTHIHFICPQQIEEALMSGVTTMIGGGTGPATGTNATTVTPGPWHMARMLQASDSFPMNIGFTGKGNVSLPGPLIEQVKAGAIGLKLHEDWGTTPAAIDNCLSVADEYDVQVAIHTDTLNESGFVETTLAAFKNRTIHTYHTEGAGGGHAPDIIKACGSPNVLPSSTNPTRPFTRNTIDEHLDMLMVCHHLDPSIAEDVAFAESRIRRETIAAEDILHDLGAFSMLSSDSQAMGRVGEVIMRTWQTADKMKKQRGPLPQDGPGNDNFRAKRYIAKYTINPAITHGISHEVGSIEVGKWADLVLWRPAFFGVKPTLILKGGAIAASLMGDANASIPTPQPVHYRPMFASFGSSLHATSLTFISQAAFDAGVPESLGLKKQIGVVKGCRTVQKKDLIHNDYLPDIEVDPQTYQVKADGVLLWCEPADVLPMAQRYFLF</sequence>
<evidence type="ECO:0000255" key="1">
    <source>
        <dbReference type="HAMAP-Rule" id="MF_01953"/>
    </source>
</evidence>